<reference key="1">
    <citation type="journal article" date="1998" name="Science">
        <title>Genome sequence of the nematode C. elegans: a platform for investigating biology.</title>
        <authorList>
            <consortium name="The C. elegans sequencing consortium"/>
        </authorList>
    </citation>
    <scope>NUCLEOTIDE SEQUENCE [LARGE SCALE GENOMIC DNA]</scope>
    <source>
        <strain>Bristol N2</strain>
    </source>
</reference>
<accession>P50581</accession>
<name>YD43_CAEEL</name>
<evidence type="ECO:0000256" key="1">
    <source>
        <dbReference type="SAM" id="MobiDB-lite"/>
    </source>
</evidence>
<evidence type="ECO:0000305" key="2"/>
<sequence length="182" mass="20693">MILSDQNFLQTQWKEPQTAQSKNTESKCEFHGNSNEVKPIGSLNGQSIAQCRIHTGKTVPIVKGGEQARMEENEIYAIETFGSTGKGYFHDDMETSHYMKNFELADEKIPLRLQKSKGLLKLIDKNFATLAFCRCWIDRLEETKYLMALKDRWMAMVGACILQSFAGKIIGKRANLLLNLII</sequence>
<organism>
    <name type="scientific">Caenorhabditis elegans</name>
    <dbReference type="NCBI Taxonomy" id="6239"/>
    <lineage>
        <taxon>Eukaryota</taxon>
        <taxon>Metazoa</taxon>
        <taxon>Ecdysozoa</taxon>
        <taxon>Nematoda</taxon>
        <taxon>Chromadorea</taxon>
        <taxon>Rhabditida</taxon>
        <taxon>Rhabditina</taxon>
        <taxon>Rhabditomorpha</taxon>
        <taxon>Rhabditoidea</taxon>
        <taxon>Rhabditidae</taxon>
        <taxon>Peloderinae</taxon>
        <taxon>Caenorhabditis</taxon>
    </lineage>
</organism>
<gene>
    <name type="ORF">T27A8.3</name>
</gene>
<keyword id="KW-0031">Aminopeptidase</keyword>
<keyword id="KW-0170">Cobalt</keyword>
<keyword id="KW-0378">Hydrolase</keyword>
<keyword id="KW-0645">Protease</keyword>
<keyword id="KW-1185">Reference proteome</keyword>
<feature type="chain" id="PRO_0000149000" description="Putative uncharacterized protein T27A8.3">
    <location>
        <begin position="1"/>
        <end position="182"/>
    </location>
</feature>
<feature type="region of interest" description="Disordered" evidence="1">
    <location>
        <begin position="1"/>
        <end position="33"/>
    </location>
</feature>
<feature type="compositionally biased region" description="Polar residues" evidence="1">
    <location>
        <begin position="1"/>
        <end position="23"/>
    </location>
</feature>
<comment type="similarity">
    <text evidence="2">Belongs to the peptidase M24 family.</text>
</comment>
<comment type="caution">
    <text evidence="2">Could be the product of a pseudogene. This sequence seems to be incomplete in both termini.</text>
</comment>
<protein>
    <recommendedName>
        <fullName>Putative uncharacterized protein T27A8.3</fullName>
    </recommendedName>
</protein>
<proteinExistence type="uncertain"/>
<dbReference type="EMBL" id="Z68134">
    <property type="protein sequence ID" value="CAA92223.1"/>
    <property type="molecule type" value="Genomic_DNA"/>
</dbReference>
<dbReference type="PIR" id="T25340">
    <property type="entry name" value="T25340"/>
</dbReference>
<dbReference type="RefSeq" id="NP_510627.1">
    <property type="nucleotide sequence ID" value="NM_078226.1"/>
</dbReference>
<dbReference type="SMR" id="P50581"/>
<dbReference type="BioGRID" id="53621">
    <property type="interactions" value="1"/>
</dbReference>
<dbReference type="FunCoup" id="P50581">
    <property type="interactions" value="7"/>
</dbReference>
<dbReference type="STRING" id="6239.T27A8.3.1"/>
<dbReference type="MEROPS" id="M24.002"/>
<dbReference type="PaxDb" id="6239-T27A8.3"/>
<dbReference type="PeptideAtlas" id="P50581"/>
<dbReference type="EnsemblMetazoa" id="T27A8.3.1">
    <property type="protein sequence ID" value="T27A8.3.1"/>
    <property type="gene ID" value="WBGene00012075"/>
</dbReference>
<dbReference type="GeneID" id="188968"/>
<dbReference type="KEGG" id="cel:CELE_T27A8.3"/>
<dbReference type="UCSC" id="T27A8.3">
    <property type="organism name" value="c. elegans"/>
</dbReference>
<dbReference type="AGR" id="WB:WBGene00012075"/>
<dbReference type="CTD" id="188968"/>
<dbReference type="WormBase" id="T27A8.3">
    <property type="protein sequence ID" value="CE03743"/>
    <property type="gene ID" value="WBGene00012075"/>
</dbReference>
<dbReference type="eggNOG" id="KOG2775">
    <property type="taxonomic scope" value="Eukaryota"/>
</dbReference>
<dbReference type="GeneTree" id="ENSGT00940000155016"/>
<dbReference type="HOGENOM" id="CLU_1483279_0_0_1"/>
<dbReference type="InParanoid" id="P50581"/>
<dbReference type="OrthoDB" id="7848262at2759"/>
<dbReference type="PhylomeDB" id="P50581"/>
<dbReference type="Proteomes" id="UP000001940">
    <property type="component" value="Chromosome X"/>
</dbReference>
<dbReference type="GO" id="GO:0005737">
    <property type="term" value="C:cytoplasm"/>
    <property type="evidence" value="ECO:0000318"/>
    <property type="project" value="GO_Central"/>
</dbReference>
<dbReference type="GO" id="GO:0004177">
    <property type="term" value="F:aminopeptidase activity"/>
    <property type="evidence" value="ECO:0000318"/>
    <property type="project" value="GO_Central"/>
</dbReference>
<dbReference type="GO" id="GO:0008235">
    <property type="term" value="F:metalloexopeptidase activity"/>
    <property type="evidence" value="ECO:0000318"/>
    <property type="project" value="GO_Central"/>
</dbReference>
<dbReference type="GO" id="GO:0006508">
    <property type="term" value="P:proteolysis"/>
    <property type="evidence" value="ECO:0007669"/>
    <property type="project" value="UniProtKB-KW"/>
</dbReference>
<dbReference type="Gene3D" id="1.10.10.10">
    <property type="entry name" value="Winged helix-like DNA-binding domain superfamily/Winged helix DNA-binding domain"/>
    <property type="match status" value="1"/>
</dbReference>
<dbReference type="InterPro" id="IPR036005">
    <property type="entry name" value="Creatinase/aminopeptidase-like"/>
</dbReference>
<dbReference type="InterPro" id="IPR050247">
    <property type="entry name" value="Met_Aminopeptidase_Type2"/>
</dbReference>
<dbReference type="InterPro" id="IPR036388">
    <property type="entry name" value="WH-like_DNA-bd_sf"/>
</dbReference>
<dbReference type="InterPro" id="IPR036390">
    <property type="entry name" value="WH_DNA-bd_sf"/>
</dbReference>
<dbReference type="PANTHER" id="PTHR45777">
    <property type="entry name" value="METHIONINE AMINOPEPTIDASE 2"/>
    <property type="match status" value="1"/>
</dbReference>
<dbReference type="PANTHER" id="PTHR45777:SF2">
    <property type="entry name" value="METHIONINE AMINOPEPTIDASE 2"/>
    <property type="match status" value="1"/>
</dbReference>
<dbReference type="SUPFAM" id="SSF55920">
    <property type="entry name" value="Creatinase/aminopeptidase"/>
    <property type="match status" value="1"/>
</dbReference>
<dbReference type="SUPFAM" id="SSF46785">
    <property type="entry name" value="Winged helix' DNA-binding domain"/>
    <property type="match status" value="1"/>
</dbReference>